<proteinExistence type="inferred from homology"/>
<name>RL13_SALEP</name>
<accession>B5R0L8</accession>
<protein>
    <recommendedName>
        <fullName evidence="1">Large ribosomal subunit protein uL13</fullName>
    </recommendedName>
    <alternativeName>
        <fullName evidence="2">50S ribosomal protein L13</fullName>
    </alternativeName>
</protein>
<organism>
    <name type="scientific">Salmonella enteritidis PT4 (strain P125109)</name>
    <dbReference type="NCBI Taxonomy" id="550537"/>
    <lineage>
        <taxon>Bacteria</taxon>
        <taxon>Pseudomonadati</taxon>
        <taxon>Pseudomonadota</taxon>
        <taxon>Gammaproteobacteria</taxon>
        <taxon>Enterobacterales</taxon>
        <taxon>Enterobacteriaceae</taxon>
        <taxon>Salmonella</taxon>
    </lineage>
</organism>
<feature type="chain" id="PRO_1000144175" description="Large ribosomal subunit protein uL13">
    <location>
        <begin position="1"/>
        <end position="142"/>
    </location>
</feature>
<keyword id="KW-0687">Ribonucleoprotein</keyword>
<keyword id="KW-0689">Ribosomal protein</keyword>
<dbReference type="EMBL" id="AM933172">
    <property type="protein sequence ID" value="CAR34754.1"/>
    <property type="molecule type" value="Genomic_DNA"/>
</dbReference>
<dbReference type="RefSeq" id="WP_000847559.1">
    <property type="nucleotide sequence ID" value="NC_011294.1"/>
</dbReference>
<dbReference type="SMR" id="B5R0L8"/>
<dbReference type="GeneID" id="89518067"/>
<dbReference type="KEGG" id="set:SEN3178"/>
<dbReference type="HOGENOM" id="CLU_082184_2_2_6"/>
<dbReference type="Proteomes" id="UP000000613">
    <property type="component" value="Chromosome"/>
</dbReference>
<dbReference type="GO" id="GO:0022625">
    <property type="term" value="C:cytosolic large ribosomal subunit"/>
    <property type="evidence" value="ECO:0007669"/>
    <property type="project" value="TreeGrafter"/>
</dbReference>
<dbReference type="GO" id="GO:0003729">
    <property type="term" value="F:mRNA binding"/>
    <property type="evidence" value="ECO:0007669"/>
    <property type="project" value="TreeGrafter"/>
</dbReference>
<dbReference type="GO" id="GO:0003735">
    <property type="term" value="F:structural constituent of ribosome"/>
    <property type="evidence" value="ECO:0007669"/>
    <property type="project" value="InterPro"/>
</dbReference>
<dbReference type="GO" id="GO:0017148">
    <property type="term" value="P:negative regulation of translation"/>
    <property type="evidence" value="ECO:0007669"/>
    <property type="project" value="TreeGrafter"/>
</dbReference>
<dbReference type="GO" id="GO:0006412">
    <property type="term" value="P:translation"/>
    <property type="evidence" value="ECO:0007669"/>
    <property type="project" value="UniProtKB-UniRule"/>
</dbReference>
<dbReference type="CDD" id="cd00392">
    <property type="entry name" value="Ribosomal_L13"/>
    <property type="match status" value="1"/>
</dbReference>
<dbReference type="FunFam" id="3.90.1180.10:FF:000001">
    <property type="entry name" value="50S ribosomal protein L13"/>
    <property type="match status" value="1"/>
</dbReference>
<dbReference type="Gene3D" id="3.90.1180.10">
    <property type="entry name" value="Ribosomal protein L13"/>
    <property type="match status" value="1"/>
</dbReference>
<dbReference type="HAMAP" id="MF_01366">
    <property type="entry name" value="Ribosomal_uL13"/>
    <property type="match status" value="1"/>
</dbReference>
<dbReference type="InterPro" id="IPR005822">
    <property type="entry name" value="Ribosomal_uL13"/>
</dbReference>
<dbReference type="InterPro" id="IPR005823">
    <property type="entry name" value="Ribosomal_uL13_bac-type"/>
</dbReference>
<dbReference type="InterPro" id="IPR023563">
    <property type="entry name" value="Ribosomal_uL13_CS"/>
</dbReference>
<dbReference type="InterPro" id="IPR036899">
    <property type="entry name" value="Ribosomal_uL13_sf"/>
</dbReference>
<dbReference type="NCBIfam" id="TIGR01066">
    <property type="entry name" value="rplM_bact"/>
    <property type="match status" value="1"/>
</dbReference>
<dbReference type="PANTHER" id="PTHR11545:SF2">
    <property type="entry name" value="LARGE RIBOSOMAL SUBUNIT PROTEIN UL13M"/>
    <property type="match status" value="1"/>
</dbReference>
<dbReference type="PANTHER" id="PTHR11545">
    <property type="entry name" value="RIBOSOMAL PROTEIN L13"/>
    <property type="match status" value="1"/>
</dbReference>
<dbReference type="Pfam" id="PF00572">
    <property type="entry name" value="Ribosomal_L13"/>
    <property type="match status" value="1"/>
</dbReference>
<dbReference type="PIRSF" id="PIRSF002181">
    <property type="entry name" value="Ribosomal_L13"/>
    <property type="match status" value="1"/>
</dbReference>
<dbReference type="SUPFAM" id="SSF52161">
    <property type="entry name" value="Ribosomal protein L13"/>
    <property type="match status" value="1"/>
</dbReference>
<dbReference type="PROSITE" id="PS00783">
    <property type="entry name" value="RIBOSOMAL_L13"/>
    <property type="match status" value="1"/>
</dbReference>
<evidence type="ECO:0000255" key="1">
    <source>
        <dbReference type="HAMAP-Rule" id="MF_01366"/>
    </source>
</evidence>
<evidence type="ECO:0000305" key="2"/>
<comment type="function">
    <text evidence="1">This protein is one of the early assembly proteins of the 50S ribosomal subunit, although it is not seen to bind rRNA by itself. It is important during the early stages of 50S assembly.</text>
</comment>
<comment type="subunit">
    <text evidence="1">Part of the 50S ribosomal subunit.</text>
</comment>
<comment type="similarity">
    <text evidence="1">Belongs to the universal ribosomal protein uL13 family.</text>
</comment>
<reference key="1">
    <citation type="journal article" date="2008" name="Genome Res.">
        <title>Comparative genome analysis of Salmonella enteritidis PT4 and Salmonella gallinarum 287/91 provides insights into evolutionary and host adaptation pathways.</title>
        <authorList>
            <person name="Thomson N.R."/>
            <person name="Clayton D.J."/>
            <person name="Windhorst D."/>
            <person name="Vernikos G."/>
            <person name="Davidson S."/>
            <person name="Churcher C."/>
            <person name="Quail M.A."/>
            <person name="Stevens M."/>
            <person name="Jones M.A."/>
            <person name="Watson M."/>
            <person name="Barron A."/>
            <person name="Layton A."/>
            <person name="Pickard D."/>
            <person name="Kingsley R.A."/>
            <person name="Bignell A."/>
            <person name="Clark L."/>
            <person name="Harris B."/>
            <person name="Ormond D."/>
            <person name="Abdellah Z."/>
            <person name="Brooks K."/>
            <person name="Cherevach I."/>
            <person name="Chillingworth T."/>
            <person name="Woodward J."/>
            <person name="Norberczak H."/>
            <person name="Lord A."/>
            <person name="Arrowsmith C."/>
            <person name="Jagels K."/>
            <person name="Moule S."/>
            <person name="Mungall K."/>
            <person name="Saunders M."/>
            <person name="Whitehead S."/>
            <person name="Chabalgoity J.A."/>
            <person name="Maskell D."/>
            <person name="Humphreys T."/>
            <person name="Roberts M."/>
            <person name="Barrow P.A."/>
            <person name="Dougan G."/>
            <person name="Parkhill J."/>
        </authorList>
    </citation>
    <scope>NUCLEOTIDE SEQUENCE [LARGE SCALE GENOMIC DNA]</scope>
    <source>
        <strain>P125109</strain>
    </source>
</reference>
<gene>
    <name evidence="1" type="primary">rplM</name>
    <name type="ordered locus">SEN3178</name>
</gene>
<sequence>MKTFTAKPETVKRDWYVVDATGKTLGRLATELARRLRGKHKAEYTPHVDTGDYIIVLNADKVAVTGNKRTDKVYYHHTGHIGGIKQATFEEMIARRPERVIEIAVKGMLPKGPLGRAMFRKLKVYAGNEHNHAAQQPQVLDI</sequence>